<protein>
    <recommendedName>
        <fullName evidence="4">Adenine-specific methyltransferase PglX</fullName>
        <ecNumber evidence="8">2.1.1.72</ecNumber>
    </recommendedName>
    <alternativeName>
        <fullName evidence="5">BREX protein PglX</fullName>
    </alternativeName>
</protein>
<name>PGLX_LACCZ</name>
<sequence>MDKKAIKTFAIQARRSLIESIKLKLENLGITKDGVAEKMSQSTNEIEYYGDKGLSITGQDIRRRRELVARLKGMAKQEEWSDALTDLIEEVAYTWFNRIIAIRFMEVNEYLPSGVRVLSSETKLKVPDILREAFEIEDDLGGYSVDEHGIIQKALDTEDPTDMDAAYVILFTKQANALNHYLPELFEKTDDFMQLLFTPSYSSGVIKDLVDDIKEDDFDVDEGGQVEIIGWLYQYYNTEPKDAAFKKKKYLSSDIPAVTQLFTPDWIVKYLVENSLGRYWIRVLHDRGDERTSLQIAQSFNWQYFMPEAKQDEISTRADLSKKRVEEITFVDPAMGSGHILIYAFDVLLQLYQSEGYSRREAAQNIVERNLFGLDIDRRAFQLTYFAMMMKLRRENRRSFELQLHPNVFEVPSTSLELKDFSGAKDGSPIDSGNLSDVLGRFGAGKELGSLITFESSIFDDKLINKIVSEREAGQLTFEMSDQVNHQWELRNLIRVGKALSSQYTISVTNPPYMGSGKMPKTLAKFVGKYYPASKSDLFAVFMERLQHLTKENGIFAMITQHQWMFLSSFKALRERMSSWPIINMAHLGTRAFEEIGGEVVQTTAFVVQKQKLQGFIGTYERLVDFDSQKKKQQAFLTAVQNPNLNYVYRTKQTNFEKIPGSPIAYWASKKKLELLQYSSYRLQNILSAREGMTTGNNALFMRSWHEVQFFKISFLSTAHQIERDKTWFPYNKGGAFRKWYGNIWYVINWKNHGEAIQSNIDKKTGRIRSHNYNGKFGFREAITWSAISSGMFSARYSPTGFLFDSKGVSSFANDHTTLLFCLAFLNSNSSSSFLELLSPTMDFKIGQVLNLPLAKQHSPQVVELTESLISSSREDWNSFENSWSFTTNILLTNIAEHHRNWTVEAAFQQWQKEADDRFNQLKANEEELNRIFIDLYGLQDELSPEEEDKDVSVRRANLPRDIKAFISYFIGCVFGRYSIDTPGLAYAGGDWDASKYKTFIPNKDDLILLTDDDYFGDDRDVMTRFKEFLTTTFGSENLNENLKFIADALGKRGDSSEEQIRAYLRDDFFKKDHLSTYQKRPIYWEFNSGRNGGFKALMYLHRYDRNTVAMIRTKYLHPLQEAYERKLVQLKKFEENEQQTRQKNKYKKQITTITKELDELIKYDEKLQHVANLHIDLDLDDGVLVNHAKAQADTKILTPLK</sequence>
<evidence type="ECO:0000250" key="1">
    <source>
        <dbReference type="UniProtKB" id="P0DUF9"/>
    </source>
</evidence>
<evidence type="ECO:0000269" key="2">
    <source>
    </source>
</evidence>
<evidence type="ECO:0000269" key="3">
    <source>
    </source>
</evidence>
<evidence type="ECO:0000303" key="4">
    <source>
    </source>
</evidence>
<evidence type="ECO:0000305" key="5"/>
<evidence type="ECO:0000305" key="6">
    <source>
    </source>
</evidence>
<evidence type="ECO:0000305" key="7">
    <source>
    </source>
</evidence>
<evidence type="ECO:0000305" key="8">
    <source>
    </source>
</evidence>
<keyword id="KW-0051">Antiviral defense</keyword>
<keyword id="KW-0489">Methyltransferase</keyword>
<keyword id="KW-0949">S-adenosyl-L-methionine</keyword>
<keyword id="KW-0808">Transferase</keyword>
<reference key="1">
    <citation type="journal article" date="2010" name="J. Bacteriol.">
        <title>Complete genome sequence of Lactobacillus casei Zhang, a new probiotic strain isolated from traditional homemade koumiss in Inner Mongolia, China.</title>
        <authorList>
            <person name="Zhang W."/>
            <person name="Yu D."/>
            <person name="Sun Z."/>
            <person name="Wu R."/>
            <person name="Chen X."/>
            <person name="Chen W."/>
            <person name="Meng H."/>
            <person name="Hu S."/>
            <person name="Zhang H."/>
        </authorList>
    </citation>
    <scope>NUCLEOTIDE SEQUENCE [LARGE SCALE GENOMIC DNA]</scope>
    <source>
        <strain>Zhang</strain>
    </source>
</reference>
<reference key="2">
    <citation type="journal article" date="2015" name="J. Dairy Sci.">
        <title>Short communication: Single molecule, real-time sequencing technology revealed species- and strain-specific methylation patterns of 2 Lactobacillus strains.</title>
        <authorList>
            <person name="Zhang W."/>
            <person name="Sun Z."/>
            <person name="Menghe B."/>
            <person name="Zhang H."/>
        </authorList>
    </citation>
    <scope>NUCLEOTIDE SEQUENCE [LARGE SCALE GENOMIC DNA]</scope>
    <scope>DISCUSSION OF FUNCTION</scope>
    <scope>DNA METHYLOME</scope>
    <source>
        <strain>Zhang</strain>
    </source>
</reference>
<reference key="3">
    <citation type="journal article" date="2015" name="EMBO J.">
        <title>BREX is a novel phage resistance system widespread in microbial genomes.</title>
        <authorList>
            <person name="Goldfarb T."/>
            <person name="Sberro H."/>
            <person name="Weinstock E."/>
            <person name="Cohen O."/>
            <person name="Doron S."/>
            <person name="Charpak-Amikam Y."/>
            <person name="Afik S."/>
            <person name="Ofir G."/>
            <person name="Sorek R."/>
        </authorList>
    </citation>
    <scope>CLASSIFICATION AND NOMENCLATURE</scope>
</reference>
<reference key="4">
    <citation type="journal article" date="2019" name="Appl. Environ. Microbiol.">
        <title>A Novel Bacteriophage Exclusion (BREX) System Encoded by the pglX Gene in Lactobacillus casei Zhang.</title>
        <authorList>
            <person name="Hui W."/>
            <person name="Zhang W."/>
            <person name="Kwok L.Y."/>
            <person name="Zhang H."/>
            <person name="Kong J."/>
            <person name="Sun T."/>
        </authorList>
    </citation>
    <scope>FUNCTION</scope>
    <scope>DISRUPTION PHENOTYPE</scope>
    <source>
        <strain>Zhang</strain>
    </source>
</reference>
<accession>P0DQP1</accession>
<gene>
    <name evidence="4" type="primary">pglX</name>
    <name type="ordered locus">LCAZH_2056</name>
</gene>
<feature type="chain" id="PRO_0000452164" description="Adenine-specific methyltransferase PglX">
    <location>
        <begin position="1"/>
        <end position="1202"/>
    </location>
</feature>
<comment type="function">
    <text evidence="1 6">BREX systems (bacteriophage exclusion) provide immunity against bacteriophage. Part of a type 1 BREX system which protects against dsDNA phage (Probable). This system allows phage adsorption but prevents phage DNA replication, without degradation of the phage DNA. Methylation of bacterial DNA by this protein guides self/non-self discrimination (By similarity).</text>
</comment>
<comment type="function">
    <text evidence="2 8">Probably methylates the adenine in the fifth position of the hexamer 5'-ACRCAG-3' in genomic DNA (Probable). N(6)-methylated adenine on the fifth position of 5'-ACRCAG-3' is found in the genome; there are 1906 sites in the genomic DNA (PubMed:25747834).</text>
</comment>
<comment type="catalytic activity">
    <reaction evidence="7 8">
        <text>a 2'-deoxyadenosine in DNA + S-adenosyl-L-methionine = an N(6)-methyl-2'-deoxyadenosine in DNA + S-adenosyl-L-homocysteine + H(+)</text>
        <dbReference type="Rhea" id="RHEA:15197"/>
        <dbReference type="Rhea" id="RHEA-COMP:12418"/>
        <dbReference type="Rhea" id="RHEA-COMP:12419"/>
        <dbReference type="ChEBI" id="CHEBI:15378"/>
        <dbReference type="ChEBI" id="CHEBI:57856"/>
        <dbReference type="ChEBI" id="CHEBI:59789"/>
        <dbReference type="ChEBI" id="CHEBI:90615"/>
        <dbReference type="ChEBI" id="CHEBI:90616"/>
        <dbReference type="EC" id="2.1.1.72"/>
    </reaction>
</comment>
<comment type="disruption phenotype">
    <text evidence="3">Loss of whole genome N(6)-adenine methylation in the fifth position of the hexamer 5'-ACRCAG-3', no visible growth phenotype. Has a higher plasmid acquisition ability (when plasmids have the methylation hexamer) but a reduced ability to retain plasmids.</text>
</comment>
<comment type="similarity">
    <text evidence="5">Belongs to the methyltransferase superfamily. PglX adenine methyltransferase family.</text>
</comment>
<proteinExistence type="inferred from homology"/>
<organism>
    <name type="scientific">Lacticaseibacillus casei (strain Zhang)</name>
    <name type="common">Lactobacillus casei</name>
    <dbReference type="NCBI Taxonomy" id="498216"/>
    <lineage>
        <taxon>Bacteria</taxon>
        <taxon>Bacillati</taxon>
        <taxon>Bacillota</taxon>
        <taxon>Bacilli</taxon>
        <taxon>Lactobacillales</taxon>
        <taxon>Lactobacillaceae</taxon>
        <taxon>Lacticaseibacillus</taxon>
    </lineage>
</organism>
<dbReference type="EC" id="2.1.1.72" evidence="8"/>
<dbReference type="EMBL" id="CP001084">
    <property type="protein sequence ID" value="ADK19266.1"/>
    <property type="molecule type" value="Genomic_DNA"/>
</dbReference>
<dbReference type="SMR" id="P0DQP1"/>
<dbReference type="REBASE" id="27010">
    <property type="entry name" value="M.LcaZI"/>
</dbReference>
<dbReference type="KEGG" id="lcz:LCAZH_2056"/>
<dbReference type="GO" id="GO:0009007">
    <property type="term" value="F:site-specific DNA-methyltransferase (adenine-specific) activity"/>
    <property type="evidence" value="ECO:0007669"/>
    <property type="project" value="UniProtKB-EC"/>
</dbReference>
<dbReference type="GO" id="GO:0051607">
    <property type="term" value="P:defense response to virus"/>
    <property type="evidence" value="ECO:0007669"/>
    <property type="project" value="UniProtKB-KW"/>
</dbReference>
<dbReference type="GO" id="GO:0006304">
    <property type="term" value="P:DNA modification"/>
    <property type="evidence" value="ECO:0007669"/>
    <property type="project" value="InterPro"/>
</dbReference>
<dbReference type="GO" id="GO:0032259">
    <property type="term" value="P:methylation"/>
    <property type="evidence" value="ECO:0007669"/>
    <property type="project" value="UniProtKB-KW"/>
</dbReference>
<dbReference type="Gene3D" id="3.40.50.150">
    <property type="entry name" value="Vaccinia Virus protein VP39"/>
    <property type="match status" value="1"/>
</dbReference>
<dbReference type="InterPro" id="IPR047939">
    <property type="entry name" value="BREX_1_PglX"/>
</dbReference>
<dbReference type="InterPro" id="IPR011639">
    <property type="entry name" value="MethylTrfase_TaqI-like_dom"/>
</dbReference>
<dbReference type="InterPro" id="IPR050953">
    <property type="entry name" value="N4_N6_ade-DNA_methylase"/>
</dbReference>
<dbReference type="InterPro" id="IPR029063">
    <property type="entry name" value="SAM-dependent_MTases_sf"/>
</dbReference>
<dbReference type="NCBIfam" id="NF033452">
    <property type="entry name" value="BREX_1_MTaseX"/>
    <property type="match status" value="1"/>
</dbReference>
<dbReference type="PANTHER" id="PTHR33841:SF1">
    <property type="entry name" value="DNA METHYLTRANSFERASE A"/>
    <property type="match status" value="1"/>
</dbReference>
<dbReference type="PANTHER" id="PTHR33841">
    <property type="entry name" value="DNA METHYLTRANSFERASE YEEA-RELATED"/>
    <property type="match status" value="1"/>
</dbReference>
<dbReference type="Pfam" id="PF07669">
    <property type="entry name" value="Eco57I"/>
    <property type="match status" value="1"/>
</dbReference>
<dbReference type="PRINTS" id="PR00507">
    <property type="entry name" value="N12N6MTFRASE"/>
</dbReference>
<dbReference type="SUPFAM" id="SSF53335">
    <property type="entry name" value="S-adenosyl-L-methionine-dependent methyltransferases"/>
    <property type="match status" value="1"/>
</dbReference>